<feature type="chain" id="PRO_1000215150" description="ATP synthase subunit a">
    <location>
        <begin position="1"/>
        <end position="289"/>
    </location>
</feature>
<feature type="transmembrane region" description="Helical" evidence="1">
    <location>
        <begin position="43"/>
        <end position="63"/>
    </location>
</feature>
<feature type="transmembrane region" description="Helical" evidence="1">
    <location>
        <begin position="104"/>
        <end position="124"/>
    </location>
</feature>
<feature type="transmembrane region" description="Helical" evidence="1">
    <location>
        <begin position="160"/>
        <end position="180"/>
    </location>
</feature>
<feature type="transmembrane region" description="Helical" evidence="1">
    <location>
        <begin position="193"/>
        <end position="213"/>
    </location>
</feature>
<feature type="transmembrane region" description="Helical" evidence="1">
    <location>
        <begin position="232"/>
        <end position="252"/>
    </location>
</feature>
<feature type="transmembrane region" description="Helical" evidence="1">
    <location>
        <begin position="259"/>
        <end position="279"/>
    </location>
</feature>
<name>ATP6_PSEFS</name>
<keyword id="KW-0066">ATP synthesis</keyword>
<keyword id="KW-0997">Cell inner membrane</keyword>
<keyword id="KW-1003">Cell membrane</keyword>
<keyword id="KW-0138">CF(0)</keyword>
<keyword id="KW-0375">Hydrogen ion transport</keyword>
<keyword id="KW-0406">Ion transport</keyword>
<keyword id="KW-0472">Membrane</keyword>
<keyword id="KW-0812">Transmembrane</keyword>
<keyword id="KW-1133">Transmembrane helix</keyword>
<keyword id="KW-0813">Transport</keyword>
<sequence length="289" mass="31646">MAETTASGYIQHHLQNLTFGQLPNGGWGFAHSAAEAKEMGFWAFHLDTLGWSVALGLIFVLIFRMAAKKATSGQPGALQNFVEVLVEFVDGSVKDSFHGRSPVIAPLALTIFVWVFLMNAVDLIPVDWIPQLAILITGDAHIPFRAVSTTDPNATLGMALSVFALIIFYSIKVKGIGGFIGELTLHPFGSKNIFVQALLIPVNFLLEFVTLIAKPISLALRLFGNMYAGELVFILIAVMFGSGLLWLSGLGVVLQWAWAVFHILIITLQAFIFMMLTIVYLSMAHEENH</sequence>
<dbReference type="EMBL" id="AM181176">
    <property type="protein sequence ID" value="CAY53734.1"/>
    <property type="molecule type" value="Genomic_DNA"/>
</dbReference>
<dbReference type="RefSeq" id="WP_015886648.1">
    <property type="nucleotide sequence ID" value="NC_012660.1"/>
</dbReference>
<dbReference type="SMR" id="C3K1F2"/>
<dbReference type="STRING" id="294.SRM1_00047"/>
<dbReference type="GeneID" id="93467755"/>
<dbReference type="eggNOG" id="COG0356">
    <property type="taxonomic scope" value="Bacteria"/>
</dbReference>
<dbReference type="HOGENOM" id="CLU_041018_1_0_6"/>
<dbReference type="OrthoDB" id="9789241at2"/>
<dbReference type="GO" id="GO:0005886">
    <property type="term" value="C:plasma membrane"/>
    <property type="evidence" value="ECO:0007669"/>
    <property type="project" value="UniProtKB-SubCell"/>
</dbReference>
<dbReference type="GO" id="GO:0045259">
    <property type="term" value="C:proton-transporting ATP synthase complex"/>
    <property type="evidence" value="ECO:0007669"/>
    <property type="project" value="UniProtKB-KW"/>
</dbReference>
<dbReference type="GO" id="GO:0046933">
    <property type="term" value="F:proton-transporting ATP synthase activity, rotational mechanism"/>
    <property type="evidence" value="ECO:0007669"/>
    <property type="project" value="UniProtKB-UniRule"/>
</dbReference>
<dbReference type="GO" id="GO:0042777">
    <property type="term" value="P:proton motive force-driven plasma membrane ATP synthesis"/>
    <property type="evidence" value="ECO:0007669"/>
    <property type="project" value="TreeGrafter"/>
</dbReference>
<dbReference type="CDD" id="cd00310">
    <property type="entry name" value="ATP-synt_Fo_a_6"/>
    <property type="match status" value="1"/>
</dbReference>
<dbReference type="FunFam" id="1.20.120.220:FF:000002">
    <property type="entry name" value="ATP synthase subunit a"/>
    <property type="match status" value="1"/>
</dbReference>
<dbReference type="Gene3D" id="1.20.120.220">
    <property type="entry name" value="ATP synthase, F0 complex, subunit A"/>
    <property type="match status" value="1"/>
</dbReference>
<dbReference type="HAMAP" id="MF_01393">
    <property type="entry name" value="ATP_synth_a_bact"/>
    <property type="match status" value="1"/>
</dbReference>
<dbReference type="InterPro" id="IPR045082">
    <property type="entry name" value="ATP_syn_F0_a_bact/chloroplast"/>
</dbReference>
<dbReference type="InterPro" id="IPR000568">
    <property type="entry name" value="ATP_synth_F0_asu"/>
</dbReference>
<dbReference type="InterPro" id="IPR023011">
    <property type="entry name" value="ATP_synth_F0_asu_AS"/>
</dbReference>
<dbReference type="InterPro" id="IPR035908">
    <property type="entry name" value="F0_ATP_A_sf"/>
</dbReference>
<dbReference type="NCBIfam" id="TIGR01131">
    <property type="entry name" value="ATP_synt_6_or_A"/>
    <property type="match status" value="1"/>
</dbReference>
<dbReference type="NCBIfam" id="NF004477">
    <property type="entry name" value="PRK05815.1-1"/>
    <property type="match status" value="1"/>
</dbReference>
<dbReference type="PANTHER" id="PTHR42823">
    <property type="entry name" value="ATP SYNTHASE SUBUNIT A, CHLOROPLASTIC"/>
    <property type="match status" value="1"/>
</dbReference>
<dbReference type="PANTHER" id="PTHR42823:SF3">
    <property type="entry name" value="ATP SYNTHASE SUBUNIT A, CHLOROPLASTIC"/>
    <property type="match status" value="1"/>
</dbReference>
<dbReference type="Pfam" id="PF00119">
    <property type="entry name" value="ATP-synt_A"/>
    <property type="match status" value="1"/>
</dbReference>
<dbReference type="SUPFAM" id="SSF81336">
    <property type="entry name" value="F1F0 ATP synthase subunit A"/>
    <property type="match status" value="1"/>
</dbReference>
<dbReference type="PROSITE" id="PS00449">
    <property type="entry name" value="ATPASE_A"/>
    <property type="match status" value="1"/>
</dbReference>
<evidence type="ECO:0000255" key="1">
    <source>
        <dbReference type="HAMAP-Rule" id="MF_01393"/>
    </source>
</evidence>
<organism>
    <name type="scientific">Pseudomonas fluorescens (strain SBW25)</name>
    <dbReference type="NCBI Taxonomy" id="216595"/>
    <lineage>
        <taxon>Bacteria</taxon>
        <taxon>Pseudomonadati</taxon>
        <taxon>Pseudomonadota</taxon>
        <taxon>Gammaproteobacteria</taxon>
        <taxon>Pseudomonadales</taxon>
        <taxon>Pseudomonadaceae</taxon>
        <taxon>Pseudomonas</taxon>
    </lineage>
</organism>
<proteinExistence type="inferred from homology"/>
<reference key="1">
    <citation type="journal article" date="2009" name="Genome Biol.">
        <title>Genomic and genetic analyses of diversity and plant interactions of Pseudomonas fluorescens.</title>
        <authorList>
            <person name="Silby M.W."/>
            <person name="Cerdeno-Tarraga A.M."/>
            <person name="Vernikos G.S."/>
            <person name="Giddens S.R."/>
            <person name="Jackson R.W."/>
            <person name="Preston G.M."/>
            <person name="Zhang X.-X."/>
            <person name="Moon C.D."/>
            <person name="Gehrig S.M."/>
            <person name="Godfrey S.A.C."/>
            <person name="Knight C.G."/>
            <person name="Malone J.G."/>
            <person name="Robinson Z."/>
            <person name="Spiers A.J."/>
            <person name="Harris S."/>
            <person name="Challis G.L."/>
            <person name="Yaxley A.M."/>
            <person name="Harris D."/>
            <person name="Seeger K."/>
            <person name="Murphy L."/>
            <person name="Rutter S."/>
            <person name="Squares R."/>
            <person name="Quail M.A."/>
            <person name="Saunders E."/>
            <person name="Mavromatis K."/>
            <person name="Brettin T.S."/>
            <person name="Bentley S.D."/>
            <person name="Hothersall J."/>
            <person name="Stephens E."/>
            <person name="Thomas C.M."/>
            <person name="Parkhill J."/>
            <person name="Levy S.B."/>
            <person name="Rainey P.B."/>
            <person name="Thomson N.R."/>
        </authorList>
    </citation>
    <scope>NUCLEOTIDE SEQUENCE [LARGE SCALE GENOMIC DNA]</scope>
    <source>
        <strain>SBW25</strain>
    </source>
</reference>
<accession>C3K1F2</accession>
<gene>
    <name evidence="1" type="primary">atpB</name>
    <name type="ordered locus">PFLU_6124</name>
</gene>
<protein>
    <recommendedName>
        <fullName evidence="1">ATP synthase subunit a</fullName>
    </recommendedName>
    <alternativeName>
        <fullName evidence="1">ATP synthase F0 sector subunit a</fullName>
    </alternativeName>
    <alternativeName>
        <fullName evidence="1">F-ATPase subunit 6</fullName>
    </alternativeName>
</protein>
<comment type="function">
    <text evidence="1">Key component of the proton channel; it plays a direct role in the translocation of protons across the membrane.</text>
</comment>
<comment type="subunit">
    <text evidence="1">F-type ATPases have 2 components, CF(1) - the catalytic core - and CF(0) - the membrane proton channel. CF(1) has five subunits: alpha(3), beta(3), gamma(1), delta(1), epsilon(1). CF(0) has three main subunits: a(1), b(2) and c(9-12). The alpha and beta chains form an alternating ring which encloses part of the gamma chain. CF(1) is attached to CF(0) by a central stalk formed by the gamma and epsilon chains, while a peripheral stalk is formed by the delta and b chains.</text>
</comment>
<comment type="subcellular location">
    <subcellularLocation>
        <location evidence="1">Cell inner membrane</location>
        <topology evidence="1">Multi-pass membrane protein</topology>
    </subcellularLocation>
</comment>
<comment type="similarity">
    <text evidence="1">Belongs to the ATPase A chain family.</text>
</comment>